<name>COBQ_LISIN</name>
<gene>
    <name evidence="1" type="primary">cobQ</name>
    <name type="synonym">cbiP</name>
    <name type="ordered locus">lin1171</name>
</gene>
<organism>
    <name type="scientific">Listeria innocua serovar 6a (strain ATCC BAA-680 / CLIP 11262)</name>
    <dbReference type="NCBI Taxonomy" id="272626"/>
    <lineage>
        <taxon>Bacteria</taxon>
        <taxon>Bacillati</taxon>
        <taxon>Bacillota</taxon>
        <taxon>Bacilli</taxon>
        <taxon>Bacillales</taxon>
        <taxon>Listeriaceae</taxon>
        <taxon>Listeria</taxon>
    </lineage>
</organism>
<evidence type="ECO:0000255" key="1">
    <source>
        <dbReference type="HAMAP-Rule" id="MF_00028"/>
    </source>
</evidence>
<reference key="1">
    <citation type="journal article" date="2001" name="Science">
        <title>Comparative genomics of Listeria species.</title>
        <authorList>
            <person name="Glaser P."/>
            <person name="Frangeul L."/>
            <person name="Buchrieser C."/>
            <person name="Rusniok C."/>
            <person name="Amend A."/>
            <person name="Baquero F."/>
            <person name="Berche P."/>
            <person name="Bloecker H."/>
            <person name="Brandt P."/>
            <person name="Chakraborty T."/>
            <person name="Charbit A."/>
            <person name="Chetouani F."/>
            <person name="Couve E."/>
            <person name="de Daruvar A."/>
            <person name="Dehoux P."/>
            <person name="Domann E."/>
            <person name="Dominguez-Bernal G."/>
            <person name="Duchaud E."/>
            <person name="Durant L."/>
            <person name="Dussurget O."/>
            <person name="Entian K.-D."/>
            <person name="Fsihi H."/>
            <person name="Garcia-del Portillo F."/>
            <person name="Garrido P."/>
            <person name="Gautier L."/>
            <person name="Goebel W."/>
            <person name="Gomez-Lopez N."/>
            <person name="Hain T."/>
            <person name="Hauf J."/>
            <person name="Jackson D."/>
            <person name="Jones L.-M."/>
            <person name="Kaerst U."/>
            <person name="Kreft J."/>
            <person name="Kuhn M."/>
            <person name="Kunst F."/>
            <person name="Kurapkat G."/>
            <person name="Madueno E."/>
            <person name="Maitournam A."/>
            <person name="Mata Vicente J."/>
            <person name="Ng E."/>
            <person name="Nedjari H."/>
            <person name="Nordsiek G."/>
            <person name="Novella S."/>
            <person name="de Pablos B."/>
            <person name="Perez-Diaz J.-C."/>
            <person name="Purcell R."/>
            <person name="Remmel B."/>
            <person name="Rose M."/>
            <person name="Schlueter T."/>
            <person name="Simoes N."/>
            <person name="Tierrez A."/>
            <person name="Vazquez-Boland J.-A."/>
            <person name="Voss H."/>
            <person name="Wehland J."/>
            <person name="Cossart P."/>
        </authorList>
    </citation>
    <scope>NUCLEOTIDE SEQUENCE [LARGE SCALE GENOMIC DNA]</scope>
    <source>
        <strain>ATCC BAA-680 / CLIP 11262</strain>
    </source>
</reference>
<protein>
    <recommendedName>
        <fullName evidence="1">Cobyric acid synthase</fullName>
    </recommendedName>
</protein>
<comment type="function">
    <text evidence="1">Catalyzes amidations at positions B, D, E, and G on adenosylcobyrinic A,C-diamide. NH(2) groups are provided by glutamine, and one molecule of ATP is hydrogenolyzed for each amidation.</text>
</comment>
<comment type="pathway">
    <text evidence="1">Cofactor biosynthesis; adenosylcobalamin biosynthesis.</text>
</comment>
<comment type="similarity">
    <text evidence="1">Belongs to the CobB/CobQ family. CobQ subfamily.</text>
</comment>
<dbReference type="EMBL" id="AL596167">
    <property type="protein sequence ID" value="CAC96402.1"/>
    <property type="molecule type" value="Genomic_DNA"/>
</dbReference>
<dbReference type="PIR" id="AB1579">
    <property type="entry name" value="AB1579"/>
</dbReference>
<dbReference type="RefSeq" id="WP_010990810.1">
    <property type="nucleotide sequence ID" value="NC_003212.1"/>
</dbReference>
<dbReference type="SMR" id="Q92CK0"/>
<dbReference type="STRING" id="272626.gene:17565501"/>
<dbReference type="GeneID" id="93234619"/>
<dbReference type="KEGG" id="lin:cbiP"/>
<dbReference type="eggNOG" id="COG1492">
    <property type="taxonomic scope" value="Bacteria"/>
</dbReference>
<dbReference type="HOGENOM" id="CLU_019250_2_2_9"/>
<dbReference type="OrthoDB" id="9808302at2"/>
<dbReference type="UniPathway" id="UPA00148"/>
<dbReference type="Proteomes" id="UP000002513">
    <property type="component" value="Chromosome"/>
</dbReference>
<dbReference type="GO" id="GO:0015420">
    <property type="term" value="F:ABC-type vitamin B12 transporter activity"/>
    <property type="evidence" value="ECO:0007669"/>
    <property type="project" value="UniProtKB-UniRule"/>
</dbReference>
<dbReference type="GO" id="GO:0003824">
    <property type="term" value="F:catalytic activity"/>
    <property type="evidence" value="ECO:0007669"/>
    <property type="project" value="InterPro"/>
</dbReference>
<dbReference type="GO" id="GO:0009236">
    <property type="term" value="P:cobalamin biosynthetic process"/>
    <property type="evidence" value="ECO:0007669"/>
    <property type="project" value="UniProtKB-UniRule"/>
</dbReference>
<dbReference type="CDD" id="cd05389">
    <property type="entry name" value="CobQ_N"/>
    <property type="match status" value="1"/>
</dbReference>
<dbReference type="CDD" id="cd01750">
    <property type="entry name" value="GATase1_CobQ"/>
    <property type="match status" value="1"/>
</dbReference>
<dbReference type="Gene3D" id="3.40.50.880">
    <property type="match status" value="1"/>
</dbReference>
<dbReference type="Gene3D" id="3.40.50.300">
    <property type="entry name" value="P-loop containing nucleotide triphosphate hydrolases"/>
    <property type="match status" value="1"/>
</dbReference>
<dbReference type="HAMAP" id="MF_00028">
    <property type="entry name" value="CobQ"/>
    <property type="match status" value="1"/>
</dbReference>
<dbReference type="InterPro" id="IPR029062">
    <property type="entry name" value="Class_I_gatase-like"/>
</dbReference>
<dbReference type="InterPro" id="IPR002586">
    <property type="entry name" value="CobQ/CobB/MinD/ParA_Nub-bd_dom"/>
</dbReference>
<dbReference type="InterPro" id="IPR033949">
    <property type="entry name" value="CobQ_GATase1"/>
</dbReference>
<dbReference type="InterPro" id="IPR047045">
    <property type="entry name" value="CobQ_N"/>
</dbReference>
<dbReference type="InterPro" id="IPR004459">
    <property type="entry name" value="CobQ_synth"/>
</dbReference>
<dbReference type="InterPro" id="IPR011698">
    <property type="entry name" value="GATase_3"/>
</dbReference>
<dbReference type="InterPro" id="IPR027417">
    <property type="entry name" value="P-loop_NTPase"/>
</dbReference>
<dbReference type="NCBIfam" id="TIGR00313">
    <property type="entry name" value="cobQ"/>
    <property type="match status" value="1"/>
</dbReference>
<dbReference type="NCBIfam" id="NF001989">
    <property type="entry name" value="PRK00784.1"/>
    <property type="match status" value="1"/>
</dbReference>
<dbReference type="PANTHER" id="PTHR21343:SF1">
    <property type="entry name" value="COBYRIC ACID SYNTHASE"/>
    <property type="match status" value="1"/>
</dbReference>
<dbReference type="PANTHER" id="PTHR21343">
    <property type="entry name" value="DETHIOBIOTIN SYNTHETASE"/>
    <property type="match status" value="1"/>
</dbReference>
<dbReference type="Pfam" id="PF01656">
    <property type="entry name" value="CbiA"/>
    <property type="match status" value="1"/>
</dbReference>
<dbReference type="Pfam" id="PF07685">
    <property type="entry name" value="GATase_3"/>
    <property type="match status" value="1"/>
</dbReference>
<dbReference type="SUPFAM" id="SSF52317">
    <property type="entry name" value="Class I glutamine amidotransferase-like"/>
    <property type="match status" value="1"/>
</dbReference>
<dbReference type="SUPFAM" id="SSF52540">
    <property type="entry name" value="P-loop containing nucleoside triphosphate hydrolases"/>
    <property type="match status" value="1"/>
</dbReference>
<dbReference type="PROSITE" id="PS51274">
    <property type="entry name" value="GATASE_COBBQ"/>
    <property type="match status" value="1"/>
</dbReference>
<sequence>MVEQIMIQGTASDAGKSVIVAGLCRLFKNKGKRVVPFKSQNMSLNSFITATGDEMGRAQVFQAEAAGVFPDVRMNPVLLKPTNDRQSQVIFMGAILDNMDAVSYHDFKQTLIPKIQAVYQSLADENDIIVLEGAGSPAEINLNDRDIVNMGMAKMVDAPVVLVADIDKGGVFASIYGTIMLLKEEERARLKGVIINKFRGDVALLQPGIEMIEELTNVPVIGVIPYANLQLEEEDSVSLSGKNYVLDSSALLDIAIICLPRISNFTDFHILEIQPDISVRYIRNLADFGNPDLVIIPGSKNTLEDMAFLEQSGLKKAIQNYAENAGKVIGICGGYQMLGKRMLDPNQVESEKVEIAGLGLLDTETIFLDQKRTTQITGVTFSSEPVEGYEIHMGQTKRGENTQPFCKIKAVNGNQETHEDGAISANKNIIGTYIHGIFDNDIFLGNLFNELLTQKNKSIYPHEIIKLKEHKETEYDKLAALLEANIQMDQLEKIMKGEKICVSTQKPAIKE</sequence>
<feature type="chain" id="PRO_0000141306" description="Cobyric acid synthase">
    <location>
        <begin position="1"/>
        <end position="511"/>
    </location>
</feature>
<feature type="domain" description="GATase cobBQ-type" evidence="1">
    <location>
        <begin position="251"/>
        <end position="443"/>
    </location>
</feature>
<feature type="active site" description="Nucleophile" evidence="1">
    <location>
        <position position="332"/>
    </location>
</feature>
<feature type="active site" evidence="1">
    <location>
        <position position="435"/>
    </location>
</feature>
<accession>Q92CK0</accession>
<proteinExistence type="inferred from homology"/>
<keyword id="KW-0169">Cobalamin biosynthesis</keyword>
<keyword id="KW-0315">Glutamine amidotransferase</keyword>